<keyword id="KW-0030">Aminoacyl-tRNA synthetase</keyword>
<keyword id="KW-0067">ATP-binding</keyword>
<keyword id="KW-0963">Cytoplasm</keyword>
<keyword id="KW-0436">Ligase</keyword>
<keyword id="KW-0547">Nucleotide-binding</keyword>
<keyword id="KW-0648">Protein biosynthesis</keyword>
<keyword id="KW-1185">Reference proteome</keyword>
<sequence>MLDVKMMRQNFDEVKAKLQTRGVKEEILVEFLRLDESRRDLLVKVEEMKKYRNDVSAEIAQLKRNKEDATAKIAEMKEVGGNIKALDAEINAIDEELRGITTTLPNLPDDSVPVGAGEEENVEVRRWSEPRTFAFEPKPHWEVAENLGILDFERGAKVAGSRFVYYKGLGARLERALYNFMLDLHVYEHGYTEMITPYIVNDTAMFGTGQFPKFKEDVFQLQDTDLTLIPTAEVPLTNYYNNEILDGKDLPIYFTALSPSFRSEAGSAGRDTRGLIRLHQFNKVEMVKFSDAEHSYEELEKMTNNAEEILQKLGLPYRVMALSTGDMGFSAAKTYDLEVWIPAQETYREISSCSNCEDFQARRAMIRYRDENDKVQYAHTLNGSGLAVGRTVAAILENYQNEDGSVTVPEVLVPYMGNLTVIK</sequence>
<reference key="1">
    <citation type="journal article" date="2003" name="Science">
        <title>Role of mobile DNA in the evolution of vancomycin-resistant Enterococcus faecalis.</title>
        <authorList>
            <person name="Paulsen I.T."/>
            <person name="Banerjei L."/>
            <person name="Myers G.S.A."/>
            <person name="Nelson K.E."/>
            <person name="Seshadri R."/>
            <person name="Read T.D."/>
            <person name="Fouts D.E."/>
            <person name="Eisen J.A."/>
            <person name="Gill S.R."/>
            <person name="Heidelberg J.F."/>
            <person name="Tettelin H."/>
            <person name="Dodson R.J."/>
            <person name="Umayam L.A."/>
            <person name="Brinkac L.M."/>
            <person name="Beanan M.J."/>
            <person name="Daugherty S.C."/>
            <person name="DeBoy R.T."/>
            <person name="Durkin S.A."/>
            <person name="Kolonay J.F."/>
            <person name="Madupu R."/>
            <person name="Nelson W.C."/>
            <person name="Vamathevan J.J."/>
            <person name="Tran B."/>
            <person name="Upton J."/>
            <person name="Hansen T."/>
            <person name="Shetty J."/>
            <person name="Khouri H.M."/>
            <person name="Utterback T.R."/>
            <person name="Radune D."/>
            <person name="Ketchum K.A."/>
            <person name="Dougherty B.A."/>
            <person name="Fraser C.M."/>
        </authorList>
    </citation>
    <scope>NUCLEOTIDE SEQUENCE [LARGE SCALE GENOMIC DNA]</scope>
    <source>
        <strain>ATCC 700802 / V583</strain>
    </source>
</reference>
<organism>
    <name type="scientific">Enterococcus faecalis (strain ATCC 700802 / V583)</name>
    <dbReference type="NCBI Taxonomy" id="226185"/>
    <lineage>
        <taxon>Bacteria</taxon>
        <taxon>Bacillati</taxon>
        <taxon>Bacillota</taxon>
        <taxon>Bacilli</taxon>
        <taxon>Lactobacillales</taxon>
        <taxon>Enterococcaceae</taxon>
        <taxon>Enterococcus</taxon>
    </lineage>
</organism>
<dbReference type="EC" id="6.1.1.11" evidence="1"/>
<dbReference type="EMBL" id="AE016830">
    <property type="protein sequence ID" value="AAO82957.1"/>
    <property type="molecule type" value="Genomic_DNA"/>
</dbReference>
<dbReference type="RefSeq" id="NP_816887.1">
    <property type="nucleotide sequence ID" value="NC_004668.1"/>
</dbReference>
<dbReference type="SMR" id="Q82YY9"/>
<dbReference type="STRING" id="226185.EF_3292"/>
<dbReference type="EnsemblBacteria" id="AAO82957">
    <property type="protein sequence ID" value="AAO82957"/>
    <property type="gene ID" value="EF_3292"/>
</dbReference>
<dbReference type="KEGG" id="efa:EF3292"/>
<dbReference type="PATRIC" id="fig|226185.45.peg.295"/>
<dbReference type="eggNOG" id="COG0172">
    <property type="taxonomic scope" value="Bacteria"/>
</dbReference>
<dbReference type="HOGENOM" id="CLU_023797_1_1_9"/>
<dbReference type="UniPathway" id="UPA00906">
    <property type="reaction ID" value="UER00895"/>
</dbReference>
<dbReference type="Proteomes" id="UP000001415">
    <property type="component" value="Chromosome"/>
</dbReference>
<dbReference type="GO" id="GO:0005737">
    <property type="term" value="C:cytoplasm"/>
    <property type="evidence" value="ECO:0007669"/>
    <property type="project" value="UniProtKB-SubCell"/>
</dbReference>
<dbReference type="GO" id="GO:0005524">
    <property type="term" value="F:ATP binding"/>
    <property type="evidence" value="ECO:0007669"/>
    <property type="project" value="UniProtKB-UniRule"/>
</dbReference>
<dbReference type="GO" id="GO:0140096">
    <property type="term" value="F:catalytic activity, acting on a protein"/>
    <property type="evidence" value="ECO:0007669"/>
    <property type="project" value="UniProtKB-ARBA"/>
</dbReference>
<dbReference type="GO" id="GO:0004828">
    <property type="term" value="F:serine-tRNA ligase activity"/>
    <property type="evidence" value="ECO:0007669"/>
    <property type="project" value="UniProtKB-UniRule"/>
</dbReference>
<dbReference type="GO" id="GO:0016740">
    <property type="term" value="F:transferase activity"/>
    <property type="evidence" value="ECO:0007669"/>
    <property type="project" value="UniProtKB-ARBA"/>
</dbReference>
<dbReference type="GO" id="GO:0016260">
    <property type="term" value="P:selenocysteine biosynthetic process"/>
    <property type="evidence" value="ECO:0007669"/>
    <property type="project" value="UniProtKB-UniRule"/>
</dbReference>
<dbReference type="GO" id="GO:0006434">
    <property type="term" value="P:seryl-tRNA aminoacylation"/>
    <property type="evidence" value="ECO:0007669"/>
    <property type="project" value="UniProtKB-UniRule"/>
</dbReference>
<dbReference type="CDD" id="cd00770">
    <property type="entry name" value="SerRS_core"/>
    <property type="match status" value="1"/>
</dbReference>
<dbReference type="Gene3D" id="3.30.930.10">
    <property type="entry name" value="Bira Bifunctional Protein, Domain 2"/>
    <property type="match status" value="1"/>
</dbReference>
<dbReference type="Gene3D" id="1.10.287.40">
    <property type="entry name" value="Serine-tRNA synthetase, tRNA binding domain"/>
    <property type="match status" value="1"/>
</dbReference>
<dbReference type="HAMAP" id="MF_00176">
    <property type="entry name" value="Ser_tRNA_synth_type1"/>
    <property type="match status" value="1"/>
</dbReference>
<dbReference type="InterPro" id="IPR002314">
    <property type="entry name" value="aa-tRNA-synt_IIb"/>
</dbReference>
<dbReference type="InterPro" id="IPR006195">
    <property type="entry name" value="aa-tRNA-synth_II"/>
</dbReference>
<dbReference type="InterPro" id="IPR045864">
    <property type="entry name" value="aa-tRNA-synth_II/BPL/LPL"/>
</dbReference>
<dbReference type="InterPro" id="IPR002317">
    <property type="entry name" value="Ser-tRNA-ligase_type_1"/>
</dbReference>
<dbReference type="InterPro" id="IPR015866">
    <property type="entry name" value="Ser-tRNA-synth_1_N"/>
</dbReference>
<dbReference type="InterPro" id="IPR042103">
    <property type="entry name" value="SerRS_1_N_sf"/>
</dbReference>
<dbReference type="InterPro" id="IPR033729">
    <property type="entry name" value="SerRS_core"/>
</dbReference>
<dbReference type="InterPro" id="IPR010978">
    <property type="entry name" value="tRNA-bd_arm"/>
</dbReference>
<dbReference type="NCBIfam" id="TIGR00414">
    <property type="entry name" value="serS"/>
    <property type="match status" value="1"/>
</dbReference>
<dbReference type="PANTHER" id="PTHR43697:SF1">
    <property type="entry name" value="SERINE--TRNA LIGASE"/>
    <property type="match status" value="1"/>
</dbReference>
<dbReference type="PANTHER" id="PTHR43697">
    <property type="entry name" value="SERYL-TRNA SYNTHETASE"/>
    <property type="match status" value="1"/>
</dbReference>
<dbReference type="Pfam" id="PF02403">
    <property type="entry name" value="Seryl_tRNA_N"/>
    <property type="match status" value="1"/>
</dbReference>
<dbReference type="Pfam" id="PF00587">
    <property type="entry name" value="tRNA-synt_2b"/>
    <property type="match status" value="1"/>
</dbReference>
<dbReference type="PIRSF" id="PIRSF001529">
    <property type="entry name" value="Ser-tRNA-synth_IIa"/>
    <property type="match status" value="1"/>
</dbReference>
<dbReference type="PRINTS" id="PR00981">
    <property type="entry name" value="TRNASYNTHSER"/>
</dbReference>
<dbReference type="SUPFAM" id="SSF55681">
    <property type="entry name" value="Class II aaRS and biotin synthetases"/>
    <property type="match status" value="1"/>
</dbReference>
<dbReference type="SUPFAM" id="SSF46589">
    <property type="entry name" value="tRNA-binding arm"/>
    <property type="match status" value="1"/>
</dbReference>
<dbReference type="PROSITE" id="PS50862">
    <property type="entry name" value="AA_TRNA_LIGASE_II"/>
    <property type="match status" value="1"/>
</dbReference>
<accession>Q82YY9</accession>
<protein>
    <recommendedName>
        <fullName evidence="1">Serine--tRNA ligase 2</fullName>
        <ecNumber evidence="1">6.1.1.11</ecNumber>
    </recommendedName>
    <alternativeName>
        <fullName evidence="1">Seryl-tRNA synthetase 2</fullName>
        <shortName evidence="1">SerRS 2</shortName>
    </alternativeName>
    <alternativeName>
        <fullName evidence="1">Seryl-tRNA(Ser/Sec) synthetase 2</fullName>
    </alternativeName>
</protein>
<comment type="function">
    <text evidence="1">Catalyzes the attachment of serine to tRNA(Ser). Is also able to aminoacylate tRNA(Sec) with serine, to form the misacylated tRNA L-seryl-tRNA(Sec), which will be further converted into selenocysteinyl-tRNA(Sec).</text>
</comment>
<comment type="catalytic activity">
    <reaction evidence="1">
        <text>tRNA(Ser) + L-serine + ATP = L-seryl-tRNA(Ser) + AMP + diphosphate + H(+)</text>
        <dbReference type="Rhea" id="RHEA:12292"/>
        <dbReference type="Rhea" id="RHEA-COMP:9669"/>
        <dbReference type="Rhea" id="RHEA-COMP:9703"/>
        <dbReference type="ChEBI" id="CHEBI:15378"/>
        <dbReference type="ChEBI" id="CHEBI:30616"/>
        <dbReference type="ChEBI" id="CHEBI:33019"/>
        <dbReference type="ChEBI" id="CHEBI:33384"/>
        <dbReference type="ChEBI" id="CHEBI:78442"/>
        <dbReference type="ChEBI" id="CHEBI:78533"/>
        <dbReference type="ChEBI" id="CHEBI:456215"/>
        <dbReference type="EC" id="6.1.1.11"/>
    </reaction>
</comment>
<comment type="catalytic activity">
    <reaction evidence="1">
        <text>tRNA(Sec) + L-serine + ATP = L-seryl-tRNA(Sec) + AMP + diphosphate + H(+)</text>
        <dbReference type="Rhea" id="RHEA:42580"/>
        <dbReference type="Rhea" id="RHEA-COMP:9742"/>
        <dbReference type="Rhea" id="RHEA-COMP:10128"/>
        <dbReference type="ChEBI" id="CHEBI:15378"/>
        <dbReference type="ChEBI" id="CHEBI:30616"/>
        <dbReference type="ChEBI" id="CHEBI:33019"/>
        <dbReference type="ChEBI" id="CHEBI:33384"/>
        <dbReference type="ChEBI" id="CHEBI:78442"/>
        <dbReference type="ChEBI" id="CHEBI:78533"/>
        <dbReference type="ChEBI" id="CHEBI:456215"/>
        <dbReference type="EC" id="6.1.1.11"/>
    </reaction>
</comment>
<comment type="pathway">
    <text evidence="1">Aminoacyl-tRNA biosynthesis; selenocysteinyl-tRNA(Sec) biosynthesis; L-seryl-tRNA(Sec) from L-serine and tRNA(Sec): step 1/1.</text>
</comment>
<comment type="subunit">
    <text evidence="1">Homodimer. The tRNA molecule binds across the dimer.</text>
</comment>
<comment type="subcellular location">
    <subcellularLocation>
        <location evidence="1">Cytoplasm</location>
    </subcellularLocation>
</comment>
<comment type="domain">
    <text evidence="1">Consists of two distinct domains, a catalytic core and a N-terminal extension that is involved in tRNA binding.</text>
</comment>
<comment type="similarity">
    <text evidence="1">Belongs to the class-II aminoacyl-tRNA synthetase family. Type-1 seryl-tRNA synthetase subfamily.</text>
</comment>
<feature type="chain" id="PRO_0000122048" description="Serine--tRNA ligase 2">
    <location>
        <begin position="1"/>
        <end position="423"/>
    </location>
</feature>
<feature type="binding site" evidence="1">
    <location>
        <begin position="231"/>
        <end position="233"/>
    </location>
    <ligand>
        <name>L-serine</name>
        <dbReference type="ChEBI" id="CHEBI:33384"/>
    </ligand>
</feature>
<feature type="binding site" evidence="1">
    <location>
        <begin position="262"/>
        <end position="264"/>
    </location>
    <ligand>
        <name>ATP</name>
        <dbReference type="ChEBI" id="CHEBI:30616"/>
    </ligand>
</feature>
<feature type="binding site" evidence="1">
    <location>
        <position position="285"/>
    </location>
    <ligand>
        <name>L-serine</name>
        <dbReference type="ChEBI" id="CHEBI:33384"/>
    </ligand>
</feature>
<feature type="binding site" evidence="1">
    <location>
        <begin position="349"/>
        <end position="352"/>
    </location>
    <ligand>
        <name>ATP</name>
        <dbReference type="ChEBI" id="CHEBI:30616"/>
    </ligand>
</feature>
<feature type="binding site" evidence="1">
    <location>
        <position position="384"/>
    </location>
    <ligand>
        <name>L-serine</name>
        <dbReference type="ChEBI" id="CHEBI:33384"/>
    </ligand>
</feature>
<name>SYS2_ENTFA</name>
<proteinExistence type="inferred from homology"/>
<gene>
    <name evidence="1" type="primary">serS2</name>
    <name type="synonym">serS-2</name>
    <name type="ordered locus">EF_3292</name>
</gene>
<evidence type="ECO:0000255" key="1">
    <source>
        <dbReference type="HAMAP-Rule" id="MF_00176"/>
    </source>
</evidence>